<name>COBT_MYCMM</name>
<dbReference type="EC" id="2.4.2.21" evidence="1"/>
<dbReference type="EMBL" id="CP000854">
    <property type="protein sequence ID" value="ACC41679.1"/>
    <property type="molecule type" value="Genomic_DNA"/>
</dbReference>
<dbReference type="RefSeq" id="WP_012394910.1">
    <property type="nucleotide sequence ID" value="NC_010612.1"/>
</dbReference>
<dbReference type="SMR" id="B2HGX6"/>
<dbReference type="STRING" id="216594.MMAR_3252"/>
<dbReference type="GeneID" id="93437304"/>
<dbReference type="KEGG" id="mmi:MMAR_3252"/>
<dbReference type="eggNOG" id="COG2038">
    <property type="taxonomic scope" value="Bacteria"/>
</dbReference>
<dbReference type="HOGENOM" id="CLU_002982_0_2_11"/>
<dbReference type="OrthoDB" id="9781491at2"/>
<dbReference type="UniPathway" id="UPA00061">
    <property type="reaction ID" value="UER00516"/>
</dbReference>
<dbReference type="Proteomes" id="UP000001190">
    <property type="component" value="Chromosome"/>
</dbReference>
<dbReference type="GO" id="GO:0008939">
    <property type="term" value="F:nicotinate-nucleotide-dimethylbenzimidazole phosphoribosyltransferase activity"/>
    <property type="evidence" value="ECO:0007669"/>
    <property type="project" value="UniProtKB-UniRule"/>
</dbReference>
<dbReference type="GO" id="GO:0009236">
    <property type="term" value="P:cobalamin biosynthetic process"/>
    <property type="evidence" value="ECO:0007669"/>
    <property type="project" value="UniProtKB-KW"/>
</dbReference>
<dbReference type="CDD" id="cd02439">
    <property type="entry name" value="DMB-PRT_CobT"/>
    <property type="match status" value="1"/>
</dbReference>
<dbReference type="FunFam" id="3.40.50.10210:FF:000001">
    <property type="entry name" value="Nicotinate-nucleotide--dimethylbenzimidazole phosphoribosyltransferase"/>
    <property type="match status" value="1"/>
</dbReference>
<dbReference type="Gene3D" id="1.10.1610.10">
    <property type="match status" value="1"/>
</dbReference>
<dbReference type="Gene3D" id="3.40.50.10210">
    <property type="match status" value="1"/>
</dbReference>
<dbReference type="HAMAP" id="MF_00230">
    <property type="entry name" value="CobT"/>
    <property type="match status" value="1"/>
</dbReference>
<dbReference type="InterPro" id="IPR003200">
    <property type="entry name" value="Nict_dMeBzImd_PRibTrfase"/>
</dbReference>
<dbReference type="InterPro" id="IPR017846">
    <property type="entry name" value="Nict_dMeBzImd_PRibTrfase_bact"/>
</dbReference>
<dbReference type="InterPro" id="IPR023195">
    <property type="entry name" value="Nict_dMeBzImd_PRibTrfase_N"/>
</dbReference>
<dbReference type="InterPro" id="IPR036087">
    <property type="entry name" value="Nict_dMeBzImd_PRibTrfase_sf"/>
</dbReference>
<dbReference type="NCBIfam" id="TIGR03160">
    <property type="entry name" value="cobT_DBIPRT"/>
    <property type="match status" value="1"/>
</dbReference>
<dbReference type="NCBIfam" id="NF000996">
    <property type="entry name" value="PRK00105.1"/>
    <property type="match status" value="1"/>
</dbReference>
<dbReference type="PANTHER" id="PTHR43463">
    <property type="entry name" value="NICOTINATE-NUCLEOTIDE--DIMETHYLBENZIMIDAZOLE PHOSPHORIBOSYLTRANSFERASE"/>
    <property type="match status" value="1"/>
</dbReference>
<dbReference type="PANTHER" id="PTHR43463:SF1">
    <property type="entry name" value="NICOTINATE-NUCLEOTIDE--DIMETHYLBENZIMIDAZOLE PHOSPHORIBOSYLTRANSFERASE"/>
    <property type="match status" value="1"/>
</dbReference>
<dbReference type="Pfam" id="PF02277">
    <property type="entry name" value="DBI_PRT"/>
    <property type="match status" value="1"/>
</dbReference>
<dbReference type="SUPFAM" id="SSF52733">
    <property type="entry name" value="Nicotinate mononucleotide:5,6-dimethylbenzimidazole phosphoribosyltransferase (CobT)"/>
    <property type="match status" value="1"/>
</dbReference>
<sequence length="358" mass="36154">MIGFAPISAPDALAEAAARARQDALTKPRGALGRLEDLSAWVASCQGQCPPRQFQRARVVVFAGDHGVTRSGVSAYPPDVTAQMVANIDGGGAAINALADVAGATVRVVDLAVDAEALSEQIGAHKVRRGSGDIATEDALTDDQTAAAIAAGQQIADAEVDAGADLLIAGDMGIGNTTPAAVLVAALTNTEPVAVVGFGTGVDDATWSRKTAAVRDALFRSARVLPDPVALLRCCGGADLAAMAGFCAQAAVRRTPLLLDGMAVTAAALVAERLAPGARQWWQAGHRSTEPGHQLALTALALDPVVDLRMRLGEGTGATVALPVLRAAVAALSSMATFAEAGVSTACDDAGATEPPES</sequence>
<comment type="function">
    <text evidence="1">Catalyzes the synthesis of alpha-ribazole-5'-phosphate from nicotinate mononucleotide (NAMN) and 5,6-dimethylbenzimidazole (DMB).</text>
</comment>
<comment type="catalytic activity">
    <reaction evidence="1">
        <text>5,6-dimethylbenzimidazole + nicotinate beta-D-ribonucleotide = alpha-ribazole 5'-phosphate + nicotinate + H(+)</text>
        <dbReference type="Rhea" id="RHEA:11196"/>
        <dbReference type="ChEBI" id="CHEBI:15378"/>
        <dbReference type="ChEBI" id="CHEBI:15890"/>
        <dbReference type="ChEBI" id="CHEBI:32544"/>
        <dbReference type="ChEBI" id="CHEBI:57502"/>
        <dbReference type="ChEBI" id="CHEBI:57918"/>
        <dbReference type="EC" id="2.4.2.21"/>
    </reaction>
</comment>
<comment type="pathway">
    <text evidence="1">Nucleoside biosynthesis; alpha-ribazole biosynthesis; alpha-ribazole from 5,6-dimethylbenzimidazole: step 1/2.</text>
</comment>
<comment type="similarity">
    <text evidence="1">Belongs to the CobT family.</text>
</comment>
<organism>
    <name type="scientific">Mycobacterium marinum (strain ATCC BAA-535 / M)</name>
    <dbReference type="NCBI Taxonomy" id="216594"/>
    <lineage>
        <taxon>Bacteria</taxon>
        <taxon>Bacillati</taxon>
        <taxon>Actinomycetota</taxon>
        <taxon>Actinomycetes</taxon>
        <taxon>Mycobacteriales</taxon>
        <taxon>Mycobacteriaceae</taxon>
        <taxon>Mycobacterium</taxon>
        <taxon>Mycobacterium ulcerans group</taxon>
    </lineage>
</organism>
<gene>
    <name evidence="1" type="primary">cobT</name>
    <name type="ordered locus">MMAR_3252</name>
</gene>
<protein>
    <recommendedName>
        <fullName evidence="1">Nicotinate-nucleotide--dimethylbenzimidazole phosphoribosyltransferase</fullName>
        <shortName evidence="1">NN:DBI PRT</shortName>
        <ecNumber evidence="1">2.4.2.21</ecNumber>
    </recommendedName>
    <alternativeName>
        <fullName evidence="1">N(1)-alpha-phosphoribosyltransferase</fullName>
    </alternativeName>
</protein>
<keyword id="KW-0169">Cobalamin biosynthesis</keyword>
<keyword id="KW-0328">Glycosyltransferase</keyword>
<keyword id="KW-1185">Reference proteome</keyword>
<keyword id="KW-0808">Transferase</keyword>
<accession>B2HGX6</accession>
<reference key="1">
    <citation type="journal article" date="2008" name="Genome Res.">
        <title>Insights from the complete genome sequence of Mycobacterium marinum on the evolution of Mycobacterium tuberculosis.</title>
        <authorList>
            <person name="Stinear T.P."/>
            <person name="Seemann T."/>
            <person name="Harrison P.F."/>
            <person name="Jenkin G.A."/>
            <person name="Davies J.K."/>
            <person name="Johnson P.D."/>
            <person name="Abdellah Z."/>
            <person name="Arrowsmith C."/>
            <person name="Chillingworth T."/>
            <person name="Churcher C."/>
            <person name="Clarke K."/>
            <person name="Cronin A."/>
            <person name="Davis P."/>
            <person name="Goodhead I."/>
            <person name="Holroyd N."/>
            <person name="Jagels K."/>
            <person name="Lord A."/>
            <person name="Moule S."/>
            <person name="Mungall K."/>
            <person name="Norbertczak H."/>
            <person name="Quail M.A."/>
            <person name="Rabbinowitsch E."/>
            <person name="Walker D."/>
            <person name="White B."/>
            <person name="Whitehead S."/>
            <person name="Small P.L."/>
            <person name="Brosch R."/>
            <person name="Ramakrishnan L."/>
            <person name="Fischbach M.A."/>
            <person name="Parkhill J."/>
            <person name="Cole S.T."/>
        </authorList>
    </citation>
    <scope>NUCLEOTIDE SEQUENCE [LARGE SCALE GENOMIC DNA]</scope>
    <source>
        <strain>ATCC BAA-535 / M</strain>
    </source>
</reference>
<feature type="chain" id="PRO_1000118968" description="Nicotinate-nucleotide--dimethylbenzimidazole phosphoribosyltransferase">
    <location>
        <begin position="1"/>
        <end position="358"/>
    </location>
</feature>
<feature type="active site" description="Proton acceptor" evidence="1">
    <location>
        <position position="314"/>
    </location>
</feature>
<evidence type="ECO:0000255" key="1">
    <source>
        <dbReference type="HAMAP-Rule" id="MF_00230"/>
    </source>
</evidence>
<proteinExistence type="inferred from homology"/>